<keyword id="KW-0002">3D-structure</keyword>
<keyword id="KW-0106">Calcium</keyword>
<keyword id="KW-0963">Cytoplasm</keyword>
<keyword id="KW-0903">Direct protein sequencing</keyword>
<keyword id="KW-1185">Reference proteome</keyword>
<sequence length="181" mass="20542">MLIYKDIFTDDELSSDSFPMKLVDDLVYEFKGKHVVRKEGEIVLAGSNPSAEEGAEDDGSDEHVERGIDIVLNHKLVEMNCYEDASMFKAYIKKFMKNVIDHMEKNNRDKADVDAFKKKIQGWVVSLLAKDRFKNLAFFIGERAAEGAENGQVAIIEYRDVDGTEVPTLMLVKEAIIEEKC</sequence>
<reference key="1">
    <citation type="journal article" date="1998" name="Science">
        <title>Genome sequence of the nematode C. elegans: a platform for investigating biology.</title>
        <authorList>
            <consortium name="The C. elegans sequencing consortium"/>
        </authorList>
    </citation>
    <scope>NUCLEOTIDE SEQUENCE [LARGE SCALE GENOMIC DNA]</scope>
    <source>
        <strain>Bristol N2</strain>
    </source>
</reference>
<reference key="2">
    <citation type="journal article" date="1997" name="Electrophoresis">
        <title>Two-dimensional gel electrophoresis of Caenorhabditis elegans homogenates and identification of protein spots by microsequencing.</title>
        <authorList>
            <person name="Bini L."/>
            <person name="Heid H."/>
            <person name="Liberatori S."/>
            <person name="Geier G."/>
            <person name="Pallini V."/>
            <person name="Zwilling R."/>
        </authorList>
    </citation>
    <scope>PROTEIN SEQUENCE OF 1-19</scope>
    <source>
        <strain>Bristol N2</strain>
    </source>
</reference>
<protein>
    <recommendedName>
        <fullName>Translationally-controlled tumor protein homolog</fullName>
        <shortName>TCTP</shortName>
    </recommendedName>
</protein>
<comment type="function">
    <text evidence="1">Involved in calcium binding and microtubule stabilization.</text>
</comment>
<comment type="subcellular location">
    <subcellularLocation>
        <location evidence="1">Cytoplasm</location>
    </subcellularLocation>
</comment>
<comment type="similarity">
    <text evidence="2">Belongs to the TCTP family.</text>
</comment>
<proteinExistence type="evidence at protein level"/>
<feature type="chain" id="PRO_0000211281" description="Translationally-controlled tumor protein homolog">
    <location>
        <begin position="1"/>
        <end position="181"/>
    </location>
</feature>
<feature type="domain" description="TCTP" evidence="2">
    <location>
        <begin position="1"/>
        <end position="181"/>
    </location>
</feature>
<feature type="strand" evidence="3">
    <location>
        <begin position="2"/>
        <end position="8"/>
    </location>
</feature>
<feature type="turn" evidence="3">
    <location>
        <begin position="10"/>
        <end position="12"/>
    </location>
</feature>
<feature type="strand" evidence="3">
    <location>
        <begin position="14"/>
        <end position="16"/>
    </location>
</feature>
<feature type="strand" evidence="3">
    <location>
        <begin position="21"/>
        <end position="23"/>
    </location>
</feature>
<feature type="turn" evidence="3">
    <location>
        <begin position="24"/>
        <end position="26"/>
    </location>
</feature>
<feature type="strand" evidence="3">
    <location>
        <begin position="27"/>
        <end position="31"/>
    </location>
</feature>
<feature type="strand" evidence="4">
    <location>
        <begin position="34"/>
        <end position="38"/>
    </location>
</feature>
<feature type="helix" evidence="3">
    <location>
        <begin position="61"/>
        <end position="63"/>
    </location>
</feature>
<feature type="strand" evidence="3">
    <location>
        <begin position="65"/>
        <end position="68"/>
    </location>
</feature>
<feature type="helix" evidence="3">
    <location>
        <begin position="69"/>
        <end position="72"/>
    </location>
</feature>
<feature type="turn" evidence="3">
    <location>
        <begin position="73"/>
        <end position="75"/>
    </location>
</feature>
<feature type="strand" evidence="3">
    <location>
        <begin position="76"/>
        <end position="79"/>
    </location>
</feature>
<feature type="helix" evidence="3">
    <location>
        <begin position="81"/>
        <end position="106"/>
    </location>
</feature>
<feature type="helix" evidence="3">
    <location>
        <begin position="110"/>
        <end position="127"/>
    </location>
</feature>
<feature type="helix" evidence="3">
    <location>
        <begin position="130"/>
        <end position="133"/>
    </location>
</feature>
<feature type="strand" evidence="3">
    <location>
        <begin position="137"/>
        <end position="141"/>
    </location>
</feature>
<feature type="helix" evidence="3">
    <location>
        <begin position="142"/>
        <end position="147"/>
    </location>
</feature>
<feature type="strand" evidence="3">
    <location>
        <begin position="153"/>
        <end position="161"/>
    </location>
</feature>
<feature type="strand" evidence="3">
    <location>
        <begin position="164"/>
        <end position="172"/>
    </location>
</feature>
<feature type="turn" evidence="3">
    <location>
        <begin position="173"/>
        <end position="175"/>
    </location>
</feature>
<feature type="strand" evidence="3">
    <location>
        <begin position="176"/>
        <end position="179"/>
    </location>
</feature>
<organism>
    <name type="scientific">Caenorhabditis elegans</name>
    <dbReference type="NCBI Taxonomy" id="6239"/>
    <lineage>
        <taxon>Eukaryota</taxon>
        <taxon>Metazoa</taxon>
        <taxon>Ecdysozoa</taxon>
        <taxon>Nematoda</taxon>
        <taxon>Chromadorea</taxon>
        <taxon>Rhabditida</taxon>
        <taxon>Rhabditina</taxon>
        <taxon>Rhabditomorpha</taxon>
        <taxon>Rhabditoidea</taxon>
        <taxon>Rhabditidae</taxon>
        <taxon>Peloderinae</taxon>
        <taxon>Caenorhabditis</taxon>
    </lineage>
</organism>
<gene>
    <name type="primary">tct-1</name>
    <name type="ORF">F25H2.11</name>
</gene>
<dbReference type="EMBL" id="Z79754">
    <property type="protein sequence ID" value="CAB02099.1"/>
    <property type="molecule type" value="Genomic_DNA"/>
</dbReference>
<dbReference type="PIR" id="T21352">
    <property type="entry name" value="T21352"/>
</dbReference>
<dbReference type="RefSeq" id="NP_001379177.1">
    <property type="nucleotide sequence ID" value="NM_001392937.1"/>
</dbReference>
<dbReference type="RefSeq" id="NP_492767.1">
    <property type="nucleotide sequence ID" value="NM_060366.5"/>
</dbReference>
<dbReference type="PDB" id="2KWB">
    <property type="method" value="NMR"/>
    <property type="chains" value="A=1-181"/>
</dbReference>
<dbReference type="PDB" id="2LOY">
    <property type="method" value="NMR"/>
    <property type="chains" value="A=1-181"/>
</dbReference>
<dbReference type="PDBsum" id="2KWB"/>
<dbReference type="PDBsum" id="2LOY"/>
<dbReference type="BMRB" id="Q93573"/>
<dbReference type="SMR" id="Q93573"/>
<dbReference type="BioGRID" id="38358">
    <property type="interactions" value="102"/>
</dbReference>
<dbReference type="DIP" id="DIP-26025N"/>
<dbReference type="FunCoup" id="Q93573">
    <property type="interactions" value="1923"/>
</dbReference>
<dbReference type="IntAct" id="Q93573">
    <property type="interactions" value="1"/>
</dbReference>
<dbReference type="STRING" id="6239.F25H2.11.1"/>
<dbReference type="iPTMnet" id="Q93573"/>
<dbReference type="PaxDb" id="6239-F25H2.11"/>
<dbReference type="PeptideAtlas" id="Q93573"/>
<dbReference type="EnsemblMetazoa" id="F25H2.11.1">
    <property type="protein sequence ID" value="F25H2.11.1"/>
    <property type="gene ID" value="WBGene00009122"/>
</dbReference>
<dbReference type="GeneID" id="172944"/>
<dbReference type="UCSC" id="F25H2.11.1">
    <property type="organism name" value="c. elegans"/>
</dbReference>
<dbReference type="AGR" id="WB:WBGene00009122"/>
<dbReference type="WormBase" id="F25H2.11">
    <property type="protein sequence ID" value="CE09656"/>
    <property type="gene ID" value="WBGene00009122"/>
    <property type="gene designation" value="tct-1"/>
</dbReference>
<dbReference type="eggNOG" id="KOG1727">
    <property type="taxonomic scope" value="Eukaryota"/>
</dbReference>
<dbReference type="GeneTree" id="ENSGT00390000006051"/>
<dbReference type="HOGENOM" id="CLU_095877_1_1_1"/>
<dbReference type="InParanoid" id="Q93573"/>
<dbReference type="OMA" id="CAMITEG"/>
<dbReference type="OrthoDB" id="10248936at2759"/>
<dbReference type="PhylomeDB" id="Q93573"/>
<dbReference type="EvolutionaryTrace" id="Q93573"/>
<dbReference type="PRO" id="PR:Q93573"/>
<dbReference type="Proteomes" id="UP000001940">
    <property type="component" value="Chromosome I"/>
</dbReference>
<dbReference type="Bgee" id="WBGene00009122">
    <property type="expression patterns" value="Expressed in embryo and 3 other cell types or tissues"/>
</dbReference>
<dbReference type="GO" id="GO:0005737">
    <property type="term" value="C:cytoplasm"/>
    <property type="evidence" value="ECO:0000318"/>
    <property type="project" value="GO_Central"/>
</dbReference>
<dbReference type="GO" id="GO:0005783">
    <property type="term" value="C:endoplasmic reticulum"/>
    <property type="evidence" value="ECO:0007005"/>
    <property type="project" value="WormBase"/>
</dbReference>
<dbReference type="GO" id="GO:0005509">
    <property type="term" value="F:calcium ion binding"/>
    <property type="evidence" value="ECO:0000318"/>
    <property type="project" value="GO_Central"/>
</dbReference>
<dbReference type="FunFam" id="2.170.150.10:FF:000010">
    <property type="entry name" value="Translationally-controlled tumor protein homolog"/>
    <property type="match status" value="1"/>
</dbReference>
<dbReference type="Gene3D" id="2.170.150.10">
    <property type="entry name" value="Metal Binding Protein, Guanine Nucleotide Exchange Factor, Chain A"/>
    <property type="match status" value="1"/>
</dbReference>
<dbReference type="InterPro" id="IPR011057">
    <property type="entry name" value="Mss4-like_sf"/>
</dbReference>
<dbReference type="InterPro" id="IPR011323">
    <property type="entry name" value="Mss4/transl-control_tumour"/>
</dbReference>
<dbReference type="InterPro" id="IPR034737">
    <property type="entry name" value="TCTP"/>
</dbReference>
<dbReference type="InterPro" id="IPR018103">
    <property type="entry name" value="Translation_control_tumour_CS"/>
</dbReference>
<dbReference type="InterPro" id="IPR018105">
    <property type="entry name" value="Translational_control_tumour_p"/>
</dbReference>
<dbReference type="PANTHER" id="PTHR11991">
    <property type="entry name" value="TRANSLATIONALLY CONTROLLED TUMOR PROTEIN-RELATED"/>
    <property type="match status" value="1"/>
</dbReference>
<dbReference type="PANTHER" id="PTHR11991:SF0">
    <property type="entry name" value="TRANSLATIONALLY-CONTROLLED TUMOR PROTEIN"/>
    <property type="match status" value="1"/>
</dbReference>
<dbReference type="Pfam" id="PF00838">
    <property type="entry name" value="TCTP"/>
    <property type="match status" value="1"/>
</dbReference>
<dbReference type="PRINTS" id="PR01653">
    <property type="entry name" value="TCTPROTEIN"/>
</dbReference>
<dbReference type="SUPFAM" id="SSF51316">
    <property type="entry name" value="Mss4-like"/>
    <property type="match status" value="1"/>
</dbReference>
<dbReference type="PROSITE" id="PS01002">
    <property type="entry name" value="TCTP_1"/>
    <property type="match status" value="1"/>
</dbReference>
<dbReference type="PROSITE" id="PS01003">
    <property type="entry name" value="TCTP_2"/>
    <property type="match status" value="1"/>
</dbReference>
<dbReference type="PROSITE" id="PS51797">
    <property type="entry name" value="TCTP_3"/>
    <property type="match status" value="1"/>
</dbReference>
<name>TCTP_CAEEL</name>
<evidence type="ECO:0000250" key="1"/>
<evidence type="ECO:0000255" key="2">
    <source>
        <dbReference type="PROSITE-ProRule" id="PRU01133"/>
    </source>
</evidence>
<evidence type="ECO:0007829" key="3">
    <source>
        <dbReference type="PDB" id="2KWB"/>
    </source>
</evidence>
<evidence type="ECO:0007829" key="4">
    <source>
        <dbReference type="PDB" id="2LOY"/>
    </source>
</evidence>
<accession>Q93573</accession>